<evidence type="ECO:0000255" key="1">
    <source>
        <dbReference type="HAMAP-Rule" id="MF_00170"/>
    </source>
</evidence>
<dbReference type="EC" id="5.3.1.6" evidence="1"/>
<dbReference type="EMBL" id="AF037440">
    <property type="protein sequence ID" value="AAB92568.1"/>
    <property type="molecule type" value="Genomic_DNA"/>
</dbReference>
<dbReference type="EMBL" id="CP001600">
    <property type="protein sequence ID" value="ACR70499.1"/>
    <property type="molecule type" value="Genomic_DNA"/>
</dbReference>
<dbReference type="RefSeq" id="WP_015872572.1">
    <property type="nucleotide sequence ID" value="NZ_CP169062.1"/>
</dbReference>
<dbReference type="SMR" id="O52398"/>
<dbReference type="STRING" id="67780.B6E78_08495"/>
<dbReference type="GeneID" id="69540217"/>
<dbReference type="KEGG" id="eic:NT01EI_3362"/>
<dbReference type="PATRIC" id="fig|634503.3.peg.2988"/>
<dbReference type="HOGENOM" id="CLU_056590_1_1_6"/>
<dbReference type="OrthoDB" id="5870696at2"/>
<dbReference type="UniPathway" id="UPA00115">
    <property type="reaction ID" value="UER00412"/>
</dbReference>
<dbReference type="Proteomes" id="UP000001485">
    <property type="component" value="Chromosome"/>
</dbReference>
<dbReference type="GO" id="GO:0005829">
    <property type="term" value="C:cytosol"/>
    <property type="evidence" value="ECO:0007669"/>
    <property type="project" value="TreeGrafter"/>
</dbReference>
<dbReference type="GO" id="GO:0004751">
    <property type="term" value="F:ribose-5-phosphate isomerase activity"/>
    <property type="evidence" value="ECO:0007669"/>
    <property type="project" value="UniProtKB-UniRule"/>
</dbReference>
<dbReference type="GO" id="GO:0006014">
    <property type="term" value="P:D-ribose metabolic process"/>
    <property type="evidence" value="ECO:0007669"/>
    <property type="project" value="TreeGrafter"/>
</dbReference>
<dbReference type="GO" id="GO:0009052">
    <property type="term" value="P:pentose-phosphate shunt, non-oxidative branch"/>
    <property type="evidence" value="ECO:0007669"/>
    <property type="project" value="UniProtKB-UniRule"/>
</dbReference>
<dbReference type="CDD" id="cd01398">
    <property type="entry name" value="RPI_A"/>
    <property type="match status" value="1"/>
</dbReference>
<dbReference type="FunFam" id="3.30.70.260:FF:000004">
    <property type="entry name" value="Ribose-5-phosphate isomerase A"/>
    <property type="match status" value="1"/>
</dbReference>
<dbReference type="FunFam" id="3.40.50.1360:FF:000001">
    <property type="entry name" value="Ribose-5-phosphate isomerase A"/>
    <property type="match status" value="1"/>
</dbReference>
<dbReference type="Gene3D" id="3.30.70.260">
    <property type="match status" value="1"/>
</dbReference>
<dbReference type="Gene3D" id="3.40.50.1360">
    <property type="match status" value="1"/>
</dbReference>
<dbReference type="HAMAP" id="MF_00170">
    <property type="entry name" value="Rib_5P_isom_A"/>
    <property type="match status" value="1"/>
</dbReference>
<dbReference type="InterPro" id="IPR037171">
    <property type="entry name" value="NagB/RpiA_transferase-like"/>
</dbReference>
<dbReference type="InterPro" id="IPR020672">
    <property type="entry name" value="Ribose5P_isomerase_typA_subgr"/>
</dbReference>
<dbReference type="InterPro" id="IPR004788">
    <property type="entry name" value="Ribose5P_isomerase_type_A"/>
</dbReference>
<dbReference type="NCBIfam" id="NF001924">
    <property type="entry name" value="PRK00702.1"/>
    <property type="match status" value="1"/>
</dbReference>
<dbReference type="NCBIfam" id="TIGR00021">
    <property type="entry name" value="rpiA"/>
    <property type="match status" value="1"/>
</dbReference>
<dbReference type="PANTHER" id="PTHR11934">
    <property type="entry name" value="RIBOSE-5-PHOSPHATE ISOMERASE"/>
    <property type="match status" value="1"/>
</dbReference>
<dbReference type="PANTHER" id="PTHR11934:SF0">
    <property type="entry name" value="RIBOSE-5-PHOSPHATE ISOMERASE"/>
    <property type="match status" value="1"/>
</dbReference>
<dbReference type="Pfam" id="PF06026">
    <property type="entry name" value="Rib_5-P_isom_A"/>
    <property type="match status" value="1"/>
</dbReference>
<dbReference type="SUPFAM" id="SSF75445">
    <property type="entry name" value="D-ribose-5-phosphate isomerase (RpiA), lid domain"/>
    <property type="match status" value="1"/>
</dbReference>
<dbReference type="SUPFAM" id="SSF100950">
    <property type="entry name" value="NagB/RpiA/CoA transferase-like"/>
    <property type="match status" value="1"/>
</dbReference>
<keyword id="KW-0413">Isomerase</keyword>
<organism>
    <name type="scientific">Edwardsiella ictaluri (strain 93-146)</name>
    <dbReference type="NCBI Taxonomy" id="634503"/>
    <lineage>
        <taxon>Bacteria</taxon>
        <taxon>Pseudomonadati</taxon>
        <taxon>Pseudomonadota</taxon>
        <taxon>Gammaproteobacteria</taxon>
        <taxon>Enterobacterales</taxon>
        <taxon>Hafniaceae</taxon>
        <taxon>Edwardsiella</taxon>
    </lineage>
</organism>
<protein>
    <recommendedName>
        <fullName evidence="1">Ribose-5-phosphate isomerase A</fullName>
        <ecNumber evidence="1">5.3.1.6</ecNumber>
    </recommendedName>
    <alternativeName>
        <fullName evidence="1">Phosphoriboisomerase A</fullName>
        <shortName evidence="1">PRI</shortName>
    </alternativeName>
</protein>
<proteinExistence type="inferred from homology"/>
<feature type="chain" id="PRO_0000158415" description="Ribose-5-phosphate isomerase A">
    <location>
        <begin position="1"/>
        <end position="219"/>
    </location>
</feature>
<feature type="active site" description="Proton acceptor" evidence="1">
    <location>
        <position position="103"/>
    </location>
</feature>
<feature type="binding site" evidence="1">
    <location>
        <begin position="28"/>
        <end position="31"/>
    </location>
    <ligand>
        <name>substrate</name>
    </ligand>
</feature>
<feature type="binding site" evidence="1">
    <location>
        <begin position="81"/>
        <end position="84"/>
    </location>
    <ligand>
        <name>substrate</name>
    </ligand>
</feature>
<feature type="binding site" evidence="1">
    <location>
        <begin position="94"/>
        <end position="97"/>
    </location>
    <ligand>
        <name>substrate</name>
    </ligand>
</feature>
<feature type="binding site" evidence="1">
    <location>
        <position position="121"/>
    </location>
    <ligand>
        <name>substrate</name>
    </ligand>
</feature>
<accession>O52398</accession>
<accession>C5BAU0</accession>
<comment type="function">
    <text evidence="1">Catalyzes the reversible conversion of ribose-5-phosphate to ribulose 5-phosphate.</text>
</comment>
<comment type="catalytic activity">
    <reaction evidence="1">
        <text>aldehydo-D-ribose 5-phosphate = D-ribulose 5-phosphate</text>
        <dbReference type="Rhea" id="RHEA:14657"/>
        <dbReference type="ChEBI" id="CHEBI:58121"/>
        <dbReference type="ChEBI" id="CHEBI:58273"/>
        <dbReference type="EC" id="5.3.1.6"/>
    </reaction>
</comment>
<comment type="pathway">
    <text evidence="1">Carbohydrate degradation; pentose phosphate pathway; D-ribose 5-phosphate from D-ribulose 5-phosphate (non-oxidative stage): step 1/1.</text>
</comment>
<comment type="subunit">
    <text evidence="1">Homodimer.</text>
</comment>
<comment type="similarity">
    <text evidence="1">Belongs to the ribose 5-phosphate isomerase family.</text>
</comment>
<sequence>MTQDELKKAVGWAALKYVRPGTIVGVGTGSTASHFIDALATMKGQIEGAVSSSDASTARLKSLGIPVFDLNEVDSLDIYVDGADEINGAMQMIKGGGAALTREKIVAAVAKKFVCIVDASKQVDILGSFPLPVEVIPMARAYVARELVKLGGQPVYRQGVLTDNGNVILDVHNLQIMEPCKLENAINAIAGVVTVGLFANRGADVALVGCADGVKTLTL</sequence>
<gene>
    <name evidence="1" type="primary">rpiA</name>
    <name type="ordered locus">NT01EI_3362</name>
</gene>
<reference key="1">
    <citation type="journal article" date="2002" name="Dis. Aquat. Organ.">
        <title>Cloning and characterization of Edwardsiella ictaluri proteins expressed and recognized by the channel catfish Ictalurus punctatus immune response during infection.</title>
        <authorList>
            <person name="Moore M.M."/>
            <person name="Fernandez D.L."/>
            <person name="Thune R.L."/>
        </authorList>
    </citation>
    <scope>NUCLEOTIDE SEQUENCE [GENOMIC DNA]</scope>
</reference>
<reference key="2">
    <citation type="submission" date="2009-03" db="EMBL/GenBank/DDBJ databases">
        <title>Complete genome sequence of Edwardsiella ictaluri 93-146.</title>
        <authorList>
            <person name="Williams M.L."/>
            <person name="Gillaspy A.F."/>
            <person name="Dyer D.W."/>
            <person name="Thune R.L."/>
            <person name="Waldbieser G.C."/>
            <person name="Schuster S.C."/>
            <person name="Gipson J."/>
            <person name="Zaitshik J."/>
            <person name="Landry C."/>
            <person name="Lawrence M.L."/>
        </authorList>
    </citation>
    <scope>NUCLEOTIDE SEQUENCE [LARGE SCALE GENOMIC DNA]</scope>
    <source>
        <strain>93-146</strain>
    </source>
</reference>
<name>RPIA_EDWI9</name>